<evidence type="ECO:0000255" key="1">
    <source>
        <dbReference type="HAMAP-Rule" id="MF_00270"/>
    </source>
</evidence>
<evidence type="ECO:0000256" key="2">
    <source>
        <dbReference type="SAM" id="MobiDB-lite"/>
    </source>
</evidence>
<evidence type="ECO:0000305" key="3"/>
<dbReference type="EMBL" id="AM711640">
    <property type="protein sequence ID" value="CAM98413.1"/>
    <property type="molecule type" value="Genomic_DNA"/>
</dbReference>
<dbReference type="RefSeq" id="YP_001430127.1">
    <property type="nucleotide sequence ID" value="NC_009766.1"/>
</dbReference>
<dbReference type="SMR" id="A7M985"/>
<dbReference type="GeneID" id="5536630"/>
<dbReference type="GO" id="GO:0005763">
    <property type="term" value="C:mitochondrial small ribosomal subunit"/>
    <property type="evidence" value="ECO:0007669"/>
    <property type="project" value="TreeGrafter"/>
</dbReference>
<dbReference type="GO" id="GO:0009536">
    <property type="term" value="C:plastid"/>
    <property type="evidence" value="ECO:0007669"/>
    <property type="project" value="UniProtKB-SubCell"/>
</dbReference>
<dbReference type="GO" id="GO:0070181">
    <property type="term" value="F:small ribosomal subunit rRNA binding"/>
    <property type="evidence" value="ECO:0007669"/>
    <property type="project" value="TreeGrafter"/>
</dbReference>
<dbReference type="GO" id="GO:0003735">
    <property type="term" value="F:structural constituent of ribosome"/>
    <property type="evidence" value="ECO:0007669"/>
    <property type="project" value="InterPro"/>
</dbReference>
<dbReference type="GO" id="GO:0006412">
    <property type="term" value="P:translation"/>
    <property type="evidence" value="ECO:0007669"/>
    <property type="project" value="InterPro"/>
</dbReference>
<dbReference type="FunFam" id="4.10.640.10:FF:000002">
    <property type="entry name" value="30S ribosomal protein S18, chloroplastic"/>
    <property type="match status" value="1"/>
</dbReference>
<dbReference type="Gene3D" id="4.10.640.10">
    <property type="entry name" value="Ribosomal protein S18"/>
    <property type="match status" value="1"/>
</dbReference>
<dbReference type="HAMAP" id="MF_00270">
    <property type="entry name" value="Ribosomal_bS18"/>
    <property type="match status" value="1"/>
</dbReference>
<dbReference type="InterPro" id="IPR001648">
    <property type="entry name" value="Ribosomal_bS18"/>
</dbReference>
<dbReference type="InterPro" id="IPR018275">
    <property type="entry name" value="Ribosomal_bS18_CS"/>
</dbReference>
<dbReference type="InterPro" id="IPR036870">
    <property type="entry name" value="Ribosomal_bS18_sf"/>
</dbReference>
<dbReference type="NCBIfam" id="TIGR00165">
    <property type="entry name" value="S18"/>
    <property type="match status" value="1"/>
</dbReference>
<dbReference type="PANTHER" id="PTHR13479">
    <property type="entry name" value="30S RIBOSOMAL PROTEIN S18"/>
    <property type="match status" value="1"/>
</dbReference>
<dbReference type="PANTHER" id="PTHR13479:SF40">
    <property type="entry name" value="SMALL RIBOSOMAL SUBUNIT PROTEIN BS18M"/>
    <property type="match status" value="1"/>
</dbReference>
<dbReference type="Pfam" id="PF01084">
    <property type="entry name" value="Ribosomal_S18"/>
    <property type="match status" value="1"/>
</dbReference>
<dbReference type="PRINTS" id="PR00974">
    <property type="entry name" value="RIBOSOMALS18"/>
</dbReference>
<dbReference type="SUPFAM" id="SSF46911">
    <property type="entry name" value="Ribosomal protein S18"/>
    <property type="match status" value="1"/>
</dbReference>
<dbReference type="PROSITE" id="PS00057">
    <property type="entry name" value="RIBOSOMAL_S18"/>
    <property type="match status" value="1"/>
</dbReference>
<reference key="1">
    <citation type="journal article" date="2007" name="BMC Plant Biol.">
        <title>Complete DNA sequences of the plastid genomes of two parasitic flowering plant species, Cuscuta reflexa and Cuscuta gronovii.</title>
        <authorList>
            <person name="Funk H.T."/>
            <person name="Berg S."/>
            <person name="Krupinska K."/>
            <person name="Maier U.-G."/>
            <person name="Krause K."/>
        </authorList>
    </citation>
    <scope>NUCLEOTIDE SEQUENCE [LARGE SCALE GENOMIC DNA]</scope>
</reference>
<accession>A7M985</accession>
<comment type="subunit">
    <text evidence="1">Part of the 30S ribosomal subunit.</text>
</comment>
<comment type="subcellular location">
    <subcellularLocation>
        <location>Plastid</location>
    </subcellularLocation>
</comment>
<comment type="similarity">
    <text evidence="1">Belongs to the bacterial ribosomal protein bS18 family.</text>
</comment>
<sequence>MDKSKRPFIKSKRSFRRRLPPIKSGDRIDYRNISLISRFLSEQGKILSKRVHRFTLKQQRLITLAIKQARILSLLPFTKRKGFERSESTPRTNALKPRNKNKQNNQTQF</sequence>
<protein>
    <recommendedName>
        <fullName evidence="3">Small ribosomal subunit protein bS18c</fullName>
    </recommendedName>
    <alternativeName>
        <fullName>Plastid 30S ribosomal protein S18</fullName>
    </alternativeName>
</protein>
<geneLocation type="plastid"/>
<keyword id="KW-0934">Plastid</keyword>
<keyword id="KW-0687">Ribonucleoprotein</keyword>
<keyword id="KW-0689">Ribosomal protein</keyword>
<keyword id="KW-0694">RNA-binding</keyword>
<keyword id="KW-0699">rRNA-binding</keyword>
<organism>
    <name type="scientific">Cuscuta reflexa</name>
    <name type="common">Southern Asian dodder</name>
    <dbReference type="NCBI Taxonomy" id="4129"/>
    <lineage>
        <taxon>Eukaryota</taxon>
        <taxon>Viridiplantae</taxon>
        <taxon>Streptophyta</taxon>
        <taxon>Embryophyta</taxon>
        <taxon>Tracheophyta</taxon>
        <taxon>Spermatophyta</taxon>
        <taxon>Magnoliopsida</taxon>
        <taxon>eudicotyledons</taxon>
        <taxon>Gunneridae</taxon>
        <taxon>Pentapetalae</taxon>
        <taxon>asterids</taxon>
        <taxon>lamiids</taxon>
        <taxon>Solanales</taxon>
        <taxon>Convolvulaceae</taxon>
        <taxon>Cuscuteae</taxon>
        <taxon>Cuscuta</taxon>
        <taxon>Cuscuta subgen. Monogynella</taxon>
    </lineage>
</organism>
<gene>
    <name evidence="1" type="primary">rps18</name>
</gene>
<feature type="chain" id="PRO_0000345581" description="Small ribosomal subunit protein bS18c">
    <location>
        <begin position="1"/>
        <end position="109"/>
    </location>
</feature>
<feature type="region of interest" description="Disordered" evidence="2">
    <location>
        <begin position="82"/>
        <end position="109"/>
    </location>
</feature>
<name>RR18_CUSRE</name>
<proteinExistence type="inferred from homology"/>